<sequence length="1182" mass="131138">MEAMSPQQDALGAQPGRSSSLTGMSRIAGGPGTKKKMKTLAERRRSAPSLILDKALQKRPSTRDSHSASIDTCAFLSSFMCSSRTLLIDGPVELKRGLQRQERHLFLFNDLFVSAKIKYNNNFKIKNKVKLADMWTASCVDEVGEGNTNALKSFVLGWPTVNFVATFSSPEQKDKWLSLLQRYIALEKEKDYPKSIPLKIFAKDIGNCAYFKTISVMNSDTASEVINMSLQMLGITGSERDYQLWVNSGKEAAPYPLIGHEYPYGIKMSHLRDTALLTQGSKDSASPSQLQEPFLMEQLPREMQCQFILKPTRLATAQQLSDSSHKTYKRRRSIINWAFWRGSSTHLDNLPVSPTSPMPGQLFGVSLPDICENDNLPKPILDMLSFLNQKGPLTKGIFRQSANMKSCRELKEKLNSGIEVHLDCESIFVIASVLKDFLRNIPESIFSSDLYDHWVCVMDQGNDEEKINTIQRLLDQLPRANVVFLRYLFGVLHNIEQHSLSNQMTAFNLAVCIAPSILWPPASSSPELENEFTKKVSLLIQFLIENCCRIFGEEITSLLGELSERSDREHTPDTSCFQLNDSSYDSLENELNEDADAPCSDLVKRLGQGSRSMDSVLTLSDYDLEPPEAEGLLTLSNFDLDQSKEEHIRTKQPLETKPVSVFVAYRKVSLGEHTRAPDGPGTPSCLPATASDARKVFRRHRRSSEPSIDYLDAKLSYLREFYQKKLRKSSCDAVLSRKDEDYLKQTQPQKKGDQRCFKQSSVTGTDVSKRNTANENIKKKSLSGHEGIQETPFTKSKPVAISVASYMSSQDHSWEQPFEADACRFSPPHIADAQKSSRAHRRCSEPSIDDQNYKLSYLRGVYSKKQSKTSCEAGLLHGEEDYLKRHKSLQMEGQKLINQSLVMGIEVGKSSSSTNQSTEKVLPPRLNLCPRASYSSLSSPGTSPSGSSVSSQDSAFSQISEHSVFTPTETSSPIDCTFRAQRKQEELSSDCDSPSLVSGMPGPSTGQASSHLAYLRKGTTEQLPQMHSVTLHPSTWLRSGLVTLKNWSLKKKTKAARPEDRKDCSLKEPLELPACAAGTPEADSLQESQEDIHLGVDEGAGQTACGLSSYACQDSEQHASSPFCLAGSRLTLGMKLHEGEESGGQYPCDNPWEGAPSGLETSEDAANTGVEPATVCNDGDRH</sequence>
<evidence type="ECO:0000250" key="1"/>
<evidence type="ECO:0000250" key="2">
    <source>
        <dbReference type="UniProtKB" id="Q6IFT4"/>
    </source>
</evidence>
<evidence type="ECO:0000255" key="3">
    <source>
        <dbReference type="PROSITE-ProRule" id="PRU00166"/>
    </source>
</evidence>
<evidence type="ECO:0000255" key="4">
    <source>
        <dbReference type="PROSITE-ProRule" id="PRU00172"/>
    </source>
</evidence>
<evidence type="ECO:0000256" key="5">
    <source>
        <dbReference type="SAM" id="MobiDB-lite"/>
    </source>
</evidence>
<evidence type="ECO:0000269" key="6">
    <source>
    </source>
</evidence>
<evidence type="ECO:0000303" key="7">
    <source>
    </source>
</evidence>
<evidence type="ECO:0000305" key="8"/>
<evidence type="ECO:0007744" key="9">
    <source>
    </source>
</evidence>
<dbReference type="EMBL" id="AY501475">
    <property type="protein sequence ID" value="AAS77204.1"/>
    <property type="molecule type" value="mRNA"/>
</dbReference>
<dbReference type="EMBL" id="AABR03065952">
    <property type="status" value="NOT_ANNOTATED_CDS"/>
    <property type="molecule type" value="Genomic_DNA"/>
</dbReference>
<dbReference type="EMBL" id="AABR03062969">
    <property type="status" value="NOT_ANNOTATED_CDS"/>
    <property type="molecule type" value="Genomic_DNA"/>
</dbReference>
<dbReference type="EMBL" id="AABR03064628">
    <property type="status" value="NOT_ANNOTATED_CDS"/>
    <property type="molecule type" value="Genomic_DNA"/>
</dbReference>
<dbReference type="EMBL" id="AABR03062444">
    <property type="status" value="NOT_ANNOTATED_CDS"/>
    <property type="molecule type" value="Genomic_DNA"/>
</dbReference>
<dbReference type="RefSeq" id="NP_001421259.1">
    <molecule id="Q6REY9-1"/>
    <property type="nucleotide sequence ID" value="NM_001434330.1"/>
</dbReference>
<dbReference type="RefSeq" id="NP_998794.2">
    <molecule id="Q6REY9-2"/>
    <property type="nucleotide sequence ID" value="NM_213629.3"/>
</dbReference>
<dbReference type="RefSeq" id="XP_006243109.1">
    <property type="nucleotide sequence ID" value="XM_006243047.3"/>
</dbReference>
<dbReference type="SMR" id="Q6REY9"/>
<dbReference type="FunCoup" id="Q6REY9">
    <property type="interactions" value="1628"/>
</dbReference>
<dbReference type="STRING" id="10116.ENSRNOP00000034071"/>
<dbReference type="GlyGen" id="Q6REY9">
    <property type="glycosylation" value="1 site"/>
</dbReference>
<dbReference type="iPTMnet" id="Q6REY9"/>
<dbReference type="PhosphoSitePlus" id="Q6REY9"/>
<dbReference type="PaxDb" id="10116-ENSRNOP00000034071"/>
<dbReference type="Ensembl" id="ENSRNOT00000035989.6">
    <molecule id="Q6REY9-1"/>
    <property type="protein sequence ID" value="ENSRNOP00000034071.3"/>
    <property type="gene ID" value="ENSRNOG00000025624.7"/>
</dbReference>
<dbReference type="Ensembl" id="ENSRNOT00000059078.2">
    <molecule id="Q6REY9-2"/>
    <property type="protein sequence ID" value="ENSRNOP00000055856.1"/>
    <property type="gene ID" value="ENSRNOG00000025624.7"/>
</dbReference>
<dbReference type="GeneID" id="367085"/>
<dbReference type="KEGG" id="rno:367085"/>
<dbReference type="UCSC" id="RGD:1303160">
    <molecule id="Q6REY9-1"/>
    <property type="organism name" value="rat"/>
</dbReference>
<dbReference type="AGR" id="RGD:1303160"/>
<dbReference type="CTD" id="57569"/>
<dbReference type="RGD" id="1303160">
    <property type="gene designation" value="Arhgap20"/>
</dbReference>
<dbReference type="eggNOG" id="KOG4724">
    <property type="taxonomic scope" value="Eukaryota"/>
</dbReference>
<dbReference type="GeneTree" id="ENSGT00940000154633"/>
<dbReference type="HOGENOM" id="CLU_008526_0_0_1"/>
<dbReference type="InParanoid" id="Q6REY9"/>
<dbReference type="OMA" id="IDDQHCK"/>
<dbReference type="OrthoDB" id="9994905at2759"/>
<dbReference type="PhylomeDB" id="Q6REY9"/>
<dbReference type="TreeFam" id="TF331062"/>
<dbReference type="Reactome" id="R-RNO-8980692">
    <property type="pathway name" value="RHOA GTPase cycle"/>
</dbReference>
<dbReference type="Reactome" id="R-RNO-9013148">
    <property type="pathway name" value="CDC42 GTPase cycle"/>
</dbReference>
<dbReference type="Reactome" id="R-RNO-9013149">
    <property type="pathway name" value="RAC1 GTPase cycle"/>
</dbReference>
<dbReference type="PRO" id="PR:Q6REY9"/>
<dbReference type="Proteomes" id="UP000002494">
    <property type="component" value="Chromosome 8"/>
</dbReference>
<dbReference type="Bgee" id="ENSRNOG00000025624">
    <property type="expression patterns" value="Expressed in testis and 17 other cell types or tissues"/>
</dbReference>
<dbReference type="GO" id="GO:0005096">
    <property type="term" value="F:GTPase activator activity"/>
    <property type="evidence" value="ECO:0000318"/>
    <property type="project" value="GO_Central"/>
</dbReference>
<dbReference type="GO" id="GO:0031267">
    <property type="term" value="F:small GTPase binding"/>
    <property type="evidence" value="ECO:0000304"/>
    <property type="project" value="RGD"/>
</dbReference>
<dbReference type="GO" id="GO:0035023">
    <property type="term" value="P:regulation of Rho protein signal transduction"/>
    <property type="evidence" value="ECO:0000304"/>
    <property type="project" value="RGD"/>
</dbReference>
<dbReference type="GO" id="GO:0007165">
    <property type="term" value="P:signal transduction"/>
    <property type="evidence" value="ECO:0007669"/>
    <property type="project" value="InterPro"/>
</dbReference>
<dbReference type="CDD" id="cd13319">
    <property type="entry name" value="PH_RARhoGAP"/>
    <property type="match status" value="1"/>
</dbReference>
<dbReference type="CDD" id="cd17115">
    <property type="entry name" value="RA_RHG20"/>
    <property type="match status" value="1"/>
</dbReference>
<dbReference type="CDD" id="cd04402">
    <property type="entry name" value="RhoGAP_ARHGAP20"/>
    <property type="match status" value="1"/>
</dbReference>
<dbReference type="FunFam" id="2.30.29.30:FF:000217">
    <property type="entry name" value="Rho GTPase activating protein 20"/>
    <property type="match status" value="1"/>
</dbReference>
<dbReference type="FunFam" id="1.10.555.10:FF:000025">
    <property type="entry name" value="Rho GTPase-activating protein 20"/>
    <property type="match status" value="1"/>
</dbReference>
<dbReference type="Gene3D" id="2.30.29.30">
    <property type="entry name" value="Pleckstrin-homology domain (PH domain)/Phosphotyrosine-binding domain (PTB)"/>
    <property type="match status" value="1"/>
</dbReference>
<dbReference type="Gene3D" id="1.10.555.10">
    <property type="entry name" value="Rho GTPase activation protein"/>
    <property type="match status" value="1"/>
</dbReference>
<dbReference type="InterPro" id="IPR047886">
    <property type="entry name" value="ARHGAP20-like_RhoGAP"/>
</dbReference>
<dbReference type="InterPro" id="IPR047887">
    <property type="entry name" value="ARHGAP20_PH"/>
</dbReference>
<dbReference type="InterPro" id="IPR047888">
    <property type="entry name" value="ARHGAP20_RA"/>
</dbReference>
<dbReference type="InterPro" id="IPR011993">
    <property type="entry name" value="PH-like_dom_sf"/>
</dbReference>
<dbReference type="InterPro" id="IPR001849">
    <property type="entry name" value="PH_domain"/>
</dbReference>
<dbReference type="InterPro" id="IPR000159">
    <property type="entry name" value="RA_dom"/>
</dbReference>
<dbReference type="InterPro" id="IPR008936">
    <property type="entry name" value="Rho_GTPase_activation_prot"/>
</dbReference>
<dbReference type="InterPro" id="IPR000198">
    <property type="entry name" value="RhoGAP_dom"/>
</dbReference>
<dbReference type="InterPro" id="IPR029071">
    <property type="entry name" value="Ubiquitin-like_domsf"/>
</dbReference>
<dbReference type="PANTHER" id="PTHR23179:SF28">
    <property type="entry name" value="RHO GTPASE-ACTIVATING PROTEIN 20"/>
    <property type="match status" value="1"/>
</dbReference>
<dbReference type="PANTHER" id="PTHR23179">
    <property type="entry name" value="T-CELL ACTIVATION RHO GTPASE ACTIVATING PROTEIN-RELATED"/>
    <property type="match status" value="1"/>
</dbReference>
<dbReference type="Pfam" id="PF00788">
    <property type="entry name" value="RA"/>
    <property type="match status" value="1"/>
</dbReference>
<dbReference type="Pfam" id="PF22286">
    <property type="entry name" value="RHG20_PH"/>
    <property type="match status" value="1"/>
</dbReference>
<dbReference type="Pfam" id="PF00620">
    <property type="entry name" value="RhoGAP"/>
    <property type="match status" value="1"/>
</dbReference>
<dbReference type="SMART" id="SM00233">
    <property type="entry name" value="PH"/>
    <property type="match status" value="1"/>
</dbReference>
<dbReference type="SMART" id="SM00324">
    <property type="entry name" value="RhoGAP"/>
    <property type="match status" value="1"/>
</dbReference>
<dbReference type="SUPFAM" id="SSF48350">
    <property type="entry name" value="GTPase activation domain, GAP"/>
    <property type="match status" value="1"/>
</dbReference>
<dbReference type="SUPFAM" id="SSF50729">
    <property type="entry name" value="PH domain-like"/>
    <property type="match status" value="1"/>
</dbReference>
<dbReference type="SUPFAM" id="SSF54236">
    <property type="entry name" value="Ubiquitin-like"/>
    <property type="match status" value="1"/>
</dbReference>
<dbReference type="PROSITE" id="PS50200">
    <property type="entry name" value="RA"/>
    <property type="match status" value="1"/>
</dbReference>
<dbReference type="PROSITE" id="PS50238">
    <property type="entry name" value="RHOGAP"/>
    <property type="match status" value="1"/>
</dbReference>
<gene>
    <name type="primary">Arhgap20</name>
</gene>
<accession>Q6REY9</accession>
<proteinExistence type="evidence at protein level"/>
<keyword id="KW-0025">Alternative splicing</keyword>
<keyword id="KW-0343">GTPase activation</keyword>
<keyword id="KW-0597">Phosphoprotein</keyword>
<keyword id="KW-1185">Reference proteome</keyword>
<reference key="1">
    <citation type="journal article" date="2004" name="Genomics">
        <title>Identification of RARhoGAP, a novel putative RhoGAP gene expressed in male germ cells.</title>
        <authorList>
            <person name="Curry B.J."/>
            <person name="Su H."/>
            <person name="Law E.G."/>
            <person name="McLaughlin E.A."/>
            <person name="Nixon B."/>
            <person name="Aitken R.J."/>
        </authorList>
    </citation>
    <scope>NUCLEOTIDE SEQUENCE [MRNA] (ISOFORM 2)</scope>
    <scope>TISSUE SPECIFICITY</scope>
    <scope>DEVELOPMENTAL STAGE</scope>
    <source>
        <strain>Wistar</strain>
        <tissue>Testis</tissue>
    </source>
</reference>
<reference key="2">
    <citation type="journal article" date="2004" name="Nature">
        <title>Genome sequence of the Brown Norway rat yields insights into mammalian evolution.</title>
        <authorList>
            <person name="Gibbs R.A."/>
            <person name="Weinstock G.M."/>
            <person name="Metzker M.L."/>
            <person name="Muzny D.M."/>
            <person name="Sodergren E.J."/>
            <person name="Scherer S."/>
            <person name="Scott G."/>
            <person name="Steffen D."/>
            <person name="Worley K.C."/>
            <person name="Burch P.E."/>
            <person name="Okwuonu G."/>
            <person name="Hines S."/>
            <person name="Lewis L."/>
            <person name="Deramo C."/>
            <person name="Delgado O."/>
            <person name="Dugan-Rocha S."/>
            <person name="Miner G."/>
            <person name="Morgan M."/>
            <person name="Hawes A."/>
            <person name="Gill R."/>
            <person name="Holt R.A."/>
            <person name="Adams M.D."/>
            <person name="Amanatides P.G."/>
            <person name="Baden-Tillson H."/>
            <person name="Barnstead M."/>
            <person name="Chin S."/>
            <person name="Evans C.A."/>
            <person name="Ferriera S."/>
            <person name="Fosler C."/>
            <person name="Glodek A."/>
            <person name="Gu Z."/>
            <person name="Jennings D."/>
            <person name="Kraft C.L."/>
            <person name="Nguyen T."/>
            <person name="Pfannkoch C.M."/>
            <person name="Sitter C."/>
            <person name="Sutton G.G."/>
            <person name="Venter J.C."/>
            <person name="Woodage T."/>
            <person name="Smith D."/>
            <person name="Lee H.-M."/>
            <person name="Gustafson E."/>
            <person name="Cahill P."/>
            <person name="Kana A."/>
            <person name="Doucette-Stamm L."/>
            <person name="Weinstock K."/>
            <person name="Fechtel K."/>
            <person name="Weiss R.B."/>
            <person name="Dunn D.M."/>
            <person name="Green E.D."/>
            <person name="Blakesley R.W."/>
            <person name="Bouffard G.G."/>
            <person name="De Jong P.J."/>
            <person name="Osoegawa K."/>
            <person name="Zhu B."/>
            <person name="Marra M."/>
            <person name="Schein J."/>
            <person name="Bosdet I."/>
            <person name="Fjell C."/>
            <person name="Jones S."/>
            <person name="Krzywinski M."/>
            <person name="Mathewson C."/>
            <person name="Siddiqui A."/>
            <person name="Wye N."/>
            <person name="McPherson J."/>
            <person name="Zhao S."/>
            <person name="Fraser C.M."/>
            <person name="Shetty J."/>
            <person name="Shatsman S."/>
            <person name="Geer K."/>
            <person name="Chen Y."/>
            <person name="Abramzon S."/>
            <person name="Nierman W.C."/>
            <person name="Havlak P.H."/>
            <person name="Chen R."/>
            <person name="Durbin K.J."/>
            <person name="Egan A."/>
            <person name="Ren Y."/>
            <person name="Song X.-Z."/>
            <person name="Li B."/>
            <person name="Liu Y."/>
            <person name="Qin X."/>
            <person name="Cawley S."/>
            <person name="Cooney A.J."/>
            <person name="D'Souza L.M."/>
            <person name="Martin K."/>
            <person name="Wu J.Q."/>
            <person name="Gonzalez-Garay M.L."/>
            <person name="Jackson A.R."/>
            <person name="Kalafus K.J."/>
            <person name="McLeod M.P."/>
            <person name="Milosavljevic A."/>
            <person name="Virk D."/>
            <person name="Volkov A."/>
            <person name="Wheeler D.A."/>
            <person name="Zhang Z."/>
            <person name="Bailey J.A."/>
            <person name="Eichler E.E."/>
            <person name="Tuzun E."/>
            <person name="Birney E."/>
            <person name="Mongin E."/>
            <person name="Ureta-Vidal A."/>
            <person name="Woodwark C."/>
            <person name="Zdobnov E."/>
            <person name="Bork P."/>
            <person name="Suyama M."/>
            <person name="Torrents D."/>
            <person name="Alexandersson M."/>
            <person name="Trask B.J."/>
            <person name="Young J.M."/>
            <person name="Huang H."/>
            <person name="Wang H."/>
            <person name="Xing H."/>
            <person name="Daniels S."/>
            <person name="Gietzen D."/>
            <person name="Schmidt J."/>
            <person name="Stevens K."/>
            <person name="Vitt U."/>
            <person name="Wingrove J."/>
            <person name="Camara F."/>
            <person name="Mar Alba M."/>
            <person name="Abril J.F."/>
            <person name="Guigo R."/>
            <person name="Smit A."/>
            <person name="Dubchak I."/>
            <person name="Rubin E.M."/>
            <person name="Couronne O."/>
            <person name="Poliakov A."/>
            <person name="Huebner N."/>
            <person name="Ganten D."/>
            <person name="Goesele C."/>
            <person name="Hummel O."/>
            <person name="Kreitler T."/>
            <person name="Lee Y.-A."/>
            <person name="Monti J."/>
            <person name="Schulz H."/>
            <person name="Zimdahl H."/>
            <person name="Himmelbauer H."/>
            <person name="Lehrach H."/>
            <person name="Jacob H.J."/>
            <person name="Bromberg S."/>
            <person name="Gullings-Handley J."/>
            <person name="Jensen-Seaman M.I."/>
            <person name="Kwitek A.E."/>
            <person name="Lazar J."/>
            <person name="Pasko D."/>
            <person name="Tonellato P.J."/>
            <person name="Twigger S."/>
            <person name="Ponting C.P."/>
            <person name="Duarte J.M."/>
            <person name="Rice S."/>
            <person name="Goodstadt L."/>
            <person name="Beatson S.A."/>
            <person name="Emes R.D."/>
            <person name="Winter E.E."/>
            <person name="Webber C."/>
            <person name="Brandt P."/>
            <person name="Nyakatura G."/>
            <person name="Adetobi M."/>
            <person name="Chiaromonte F."/>
            <person name="Elnitski L."/>
            <person name="Eswara P."/>
            <person name="Hardison R.C."/>
            <person name="Hou M."/>
            <person name="Kolbe D."/>
            <person name="Makova K."/>
            <person name="Miller W."/>
            <person name="Nekrutenko A."/>
            <person name="Riemer C."/>
            <person name="Schwartz S."/>
            <person name="Taylor J."/>
            <person name="Yang S."/>
            <person name="Zhang Y."/>
            <person name="Lindpaintner K."/>
            <person name="Andrews T.D."/>
            <person name="Caccamo M."/>
            <person name="Clamp M."/>
            <person name="Clarke L."/>
            <person name="Curwen V."/>
            <person name="Durbin R.M."/>
            <person name="Eyras E."/>
            <person name="Searle S.M."/>
            <person name="Cooper G.M."/>
            <person name="Batzoglou S."/>
            <person name="Brudno M."/>
            <person name="Sidow A."/>
            <person name="Stone E.A."/>
            <person name="Payseur B.A."/>
            <person name="Bourque G."/>
            <person name="Lopez-Otin C."/>
            <person name="Puente X.S."/>
            <person name="Chakrabarti K."/>
            <person name="Chatterji S."/>
            <person name="Dewey C."/>
            <person name="Pachter L."/>
            <person name="Bray N."/>
            <person name="Yap V.B."/>
            <person name="Caspi A."/>
            <person name="Tesler G."/>
            <person name="Pevzner P.A."/>
            <person name="Haussler D."/>
            <person name="Roskin K.M."/>
            <person name="Baertsch R."/>
            <person name="Clawson H."/>
            <person name="Furey T.S."/>
            <person name="Hinrichs A.S."/>
            <person name="Karolchik D."/>
            <person name="Kent W.J."/>
            <person name="Rosenbloom K.R."/>
            <person name="Trumbower H."/>
            <person name="Weirauch M."/>
            <person name="Cooper D.N."/>
            <person name="Stenson P.D."/>
            <person name="Ma B."/>
            <person name="Brent M."/>
            <person name="Arumugam M."/>
            <person name="Shteynberg D."/>
            <person name="Copley R.R."/>
            <person name="Taylor M.S."/>
            <person name="Riethman H."/>
            <person name="Mudunuri U."/>
            <person name="Peterson J."/>
            <person name="Guyer M."/>
            <person name="Felsenfeld A."/>
            <person name="Old S."/>
            <person name="Mockrin S."/>
            <person name="Collins F.S."/>
        </authorList>
    </citation>
    <scope>NUCLEOTIDE SEQUENCE [LARGE SCALE GENOMIC DNA]</scope>
    <source>
        <strain>Brown Norway</strain>
    </source>
</reference>
<reference key="3">
    <citation type="journal article" date="2012" name="Nat. Commun.">
        <title>Quantitative maps of protein phosphorylation sites across 14 different rat organs and tissues.</title>
        <authorList>
            <person name="Lundby A."/>
            <person name="Secher A."/>
            <person name="Lage K."/>
            <person name="Nordsborg N.B."/>
            <person name="Dmytriyev A."/>
            <person name="Lundby C."/>
            <person name="Olsen J.V."/>
        </authorList>
    </citation>
    <scope>PHOSPHORYLATION [LARGE SCALE ANALYSIS] AT SER-46</scope>
    <scope>IDENTIFICATION BY MASS SPECTROMETRY [LARGE SCALE ANALYSIS]</scope>
</reference>
<protein>
    <recommendedName>
        <fullName>Rho GTPase-activating protein 20</fullName>
    </recommendedName>
    <alternativeName>
        <fullName>RA and RhoGAP domain-containing protein</fullName>
        <shortName>RARhoGAP</shortName>
    </alternativeName>
    <alternativeName>
        <fullName>Rho-type GTPase-activating protein 20</fullName>
    </alternativeName>
</protein>
<name>RHG20_RAT</name>
<feature type="chain" id="PRO_0000283088" description="Rho GTPase-activating protein 20">
    <location>
        <begin position="1"/>
        <end position="1182"/>
    </location>
</feature>
<feature type="domain" description="PH">
    <location>
        <begin position="86"/>
        <end position="187"/>
    </location>
</feature>
<feature type="domain" description="Ras-associating" evidence="3">
    <location>
        <begin position="194"/>
        <end position="283"/>
    </location>
</feature>
<feature type="domain" description="Rho-GAP" evidence="4">
    <location>
        <begin position="365"/>
        <end position="551"/>
    </location>
</feature>
<feature type="region of interest" description="Disordered" evidence="5">
    <location>
        <begin position="1"/>
        <end position="40"/>
    </location>
</feature>
<feature type="region of interest" description="Disordered" evidence="5">
    <location>
        <begin position="744"/>
        <end position="791"/>
    </location>
</feature>
<feature type="region of interest" description="Disordered" evidence="5">
    <location>
        <begin position="932"/>
        <end position="953"/>
    </location>
</feature>
<feature type="region of interest" description="Disordered" evidence="5">
    <location>
        <begin position="981"/>
        <end position="1009"/>
    </location>
</feature>
<feature type="region of interest" description="Disordered" evidence="5">
    <location>
        <begin position="1140"/>
        <end position="1182"/>
    </location>
</feature>
<feature type="compositionally biased region" description="Polar residues" evidence="5">
    <location>
        <begin position="757"/>
        <end position="775"/>
    </location>
</feature>
<feature type="compositionally biased region" description="Low complexity" evidence="5">
    <location>
        <begin position="933"/>
        <end position="953"/>
    </location>
</feature>
<feature type="site" description="Arginine finger; crucial for GTP hydrolysis by stabilizing the transition state" evidence="4">
    <location>
        <position position="399"/>
    </location>
</feature>
<feature type="modified residue" description="Phosphoserine" evidence="9">
    <location>
        <position position="46"/>
    </location>
</feature>
<feature type="modified residue" description="Phosphoserine" evidence="2">
    <location>
        <position position="704"/>
    </location>
</feature>
<feature type="modified residue" description="Phosphoserine" evidence="2">
    <location>
        <position position="730"/>
    </location>
</feature>
<feature type="splice variant" id="VSP_024302" description="In isoform 2." evidence="7">
    <location>
        <begin position="1"/>
        <end position="36"/>
    </location>
</feature>
<feature type="sequence conflict" description="In Ref. 1; AAS77204." evidence="8" ref="1">
    <original>S</original>
    <variation>F</variation>
    <location>
        <position position="284"/>
    </location>
</feature>
<feature type="sequence conflict" description="In Ref. 1; AAS77204." evidence="8" ref="1">
    <original>S</original>
    <variation>P</variation>
    <location>
        <position position="615"/>
    </location>
</feature>
<feature type="sequence conflict" description="In Ref. 1; AAS77204." evidence="8" ref="1">
    <original>NF</original>
    <variation>SL</variation>
    <location>
        <begin position="637"/>
        <end position="638"/>
    </location>
</feature>
<feature type="sequence conflict" description="In Ref. 1; AAS77204." evidence="8" ref="1">
    <original>I</original>
    <variation>N</variation>
    <location>
        <position position="788"/>
    </location>
</feature>
<feature type="sequence conflict" description="In Ref. 1; AAS77204." evidence="8" ref="1">
    <original>S</original>
    <variation>C</variation>
    <location>
        <position position="960"/>
    </location>
</feature>
<feature type="sequence conflict" description="In Ref. 1; AAS77204." evidence="8" ref="1">
    <original>T</original>
    <variation>M</variation>
    <location>
        <position position="1005"/>
    </location>
</feature>
<feature type="sequence conflict" description="In Ref. 1; AAS77204." evidence="8" ref="1">
    <original>G</original>
    <variation>E</variation>
    <location>
        <position position="1099"/>
    </location>
</feature>
<feature type="sequence conflict" description="In Ref. 1; AAS77204." evidence="8" ref="1">
    <original>A</original>
    <variation>T</variation>
    <location>
        <position position="1104"/>
    </location>
</feature>
<feature type="sequence conflict" description="In Ref. 1; AAS77204." evidence="8" ref="1">
    <original>M</original>
    <variation>I</variation>
    <location>
        <position position="1134"/>
    </location>
</feature>
<feature type="sequence conflict" description="In Ref. 1; AAS77204." evidence="8" ref="1">
    <original>P</original>
    <variation>T</variation>
    <location>
        <position position="1156"/>
    </location>
</feature>
<comment type="function">
    <text evidence="1">GTPase activator for the Rho-type GTPases by converting them to an inactive GDP-bound state.</text>
</comment>
<comment type="alternative products">
    <event type="alternative splicing"/>
    <isoform>
        <id>Q6REY9-1</id>
        <name>1</name>
        <sequence type="displayed"/>
    </isoform>
    <isoform>
        <id>Q6REY9-2</id>
        <name>2</name>
        <sequence type="described" ref="VSP_024302"/>
    </isoform>
</comment>
<comment type="tissue specificity">
    <text evidence="6">Highest expression is found in testis. Ubiquitously expressed in extragonadal tissues.</text>
</comment>
<comment type="developmental stage">
    <text evidence="6">Found to be expressed in developing spermatocytes, but not in terminally differentiated spermatozoa.</text>
</comment>
<organism>
    <name type="scientific">Rattus norvegicus</name>
    <name type="common">Rat</name>
    <dbReference type="NCBI Taxonomy" id="10116"/>
    <lineage>
        <taxon>Eukaryota</taxon>
        <taxon>Metazoa</taxon>
        <taxon>Chordata</taxon>
        <taxon>Craniata</taxon>
        <taxon>Vertebrata</taxon>
        <taxon>Euteleostomi</taxon>
        <taxon>Mammalia</taxon>
        <taxon>Eutheria</taxon>
        <taxon>Euarchontoglires</taxon>
        <taxon>Glires</taxon>
        <taxon>Rodentia</taxon>
        <taxon>Myomorpha</taxon>
        <taxon>Muroidea</taxon>
        <taxon>Muridae</taxon>
        <taxon>Murinae</taxon>
        <taxon>Rattus</taxon>
    </lineage>
</organism>